<sequence length="308" mass="35080">MRFKGLDLNLLVALDALMTERNLTAAARSINLSQPAMSAAVGRLRVYFEDELFTMNGRELVLTPRAKGLVSAVREALLHIQLSIISWEPFDPFQSDRRFRIILSDFLTLVFMEKVVKRRAREAPGVSFEFLPLADDYDELLRRGEVDFIILPDVFMPTGHPRAKLFEERLVCVGCGRNQELSQPLTFDRYMSMGHVAAKFGNSRRPSIEEWYLLEHGFKRRIEVVVQGFSMILPVLSNTNRIATVPLRLAQHFAEVLPLRIMDLPLPLPPFTEAVQWPALQNSDPASLWMRGILLQEASRLALPSAEH</sequence>
<protein>
    <recommendedName>
        <fullName>Nodulation protein D 1</fullName>
    </recommendedName>
</protein>
<name>NODD1_RHITR</name>
<comment type="function">
    <text>NodD regulates the expression of the nodABCFE genes which encode other nodulation proteins. NodD is also a negative regulator of its own expression. Binds flavonoids as inducers.</text>
</comment>
<comment type="similarity">
    <text evidence="2">Belongs to the LysR transcriptional regulatory family.</text>
</comment>
<proteinExistence type="inferred from homology"/>
<keyword id="KW-0010">Activator</keyword>
<keyword id="KW-0238">DNA-binding</keyword>
<keyword id="KW-0536">Nodulation</keyword>
<keyword id="KW-0678">Repressor</keyword>
<keyword id="KW-0804">Transcription</keyword>
<keyword id="KW-0805">Transcription regulation</keyword>
<reference key="1">
    <citation type="journal article" date="1993" name="J. Bacteriol.">
        <title>Multiple copies of nodD in Rhizobium tropici CIAT899 and BR816.</title>
        <authorList>
            <person name="van Rhijn P.J."/>
            <person name="Feys B."/>
            <person name="Vanderleyden J."/>
        </authorList>
    </citation>
    <scope>NUCLEOTIDE SEQUENCE [GENOMIC DNA]</scope>
</reference>
<reference key="2">
    <citation type="journal article" date="1993" name="Mol. Microbiol.">
        <title>A Rhizobium tropici DNA region carrying the amino-terminal half of a nodD gene and a nod-box-like sequence confers host-range extension.</title>
        <authorList>
            <person name="Sousa C."/>
            <person name="Folch J.L."/>
            <person name="Boloix P."/>
            <person name="Megias M."/>
            <person name="Nava N."/>
            <person name="Quinto C."/>
        </authorList>
    </citation>
    <scope>NUCLEOTIDE SEQUENCE [GENOMIC DNA]</scope>
</reference>
<organism>
    <name type="scientific">Rhizobium tropici</name>
    <dbReference type="NCBI Taxonomy" id="398"/>
    <lineage>
        <taxon>Bacteria</taxon>
        <taxon>Pseudomonadati</taxon>
        <taxon>Pseudomonadota</taxon>
        <taxon>Alphaproteobacteria</taxon>
        <taxon>Hyphomicrobiales</taxon>
        <taxon>Rhizobiaceae</taxon>
        <taxon>Rhizobium/Agrobacterium group</taxon>
        <taxon>Rhizobium</taxon>
    </lineage>
</organism>
<feature type="chain" id="PRO_0000105723" description="Nodulation protein D 1">
    <location>
        <begin position="1"/>
        <end position="308"/>
    </location>
</feature>
<feature type="domain" description="HTH lysR-type" evidence="1">
    <location>
        <begin position="6"/>
        <end position="63"/>
    </location>
</feature>
<feature type="DNA-binding region" description="H-T-H motif" evidence="1">
    <location>
        <begin position="23"/>
        <end position="42"/>
    </location>
</feature>
<gene>
    <name type="primary">nodD1</name>
</gene>
<dbReference type="EMBL" id="L01273">
    <property type="protein sequence ID" value="AAA26335.1"/>
    <property type="molecule type" value="Genomic_DNA"/>
</dbReference>
<dbReference type="EMBL" id="L04660">
    <property type="protein sequence ID" value="AAA65533.1"/>
    <property type="molecule type" value="Genomic_DNA"/>
</dbReference>
<dbReference type="PIR" id="A40642">
    <property type="entry name" value="A40642"/>
</dbReference>
<dbReference type="SMR" id="Q02876"/>
<dbReference type="GO" id="GO:0003677">
    <property type="term" value="F:DNA binding"/>
    <property type="evidence" value="ECO:0007669"/>
    <property type="project" value="UniProtKB-KW"/>
</dbReference>
<dbReference type="GO" id="GO:0003700">
    <property type="term" value="F:DNA-binding transcription factor activity"/>
    <property type="evidence" value="ECO:0007669"/>
    <property type="project" value="InterPro"/>
</dbReference>
<dbReference type="CDD" id="cd08462">
    <property type="entry name" value="PBP2_NodD"/>
    <property type="match status" value="1"/>
</dbReference>
<dbReference type="Gene3D" id="3.40.190.10">
    <property type="entry name" value="Periplasmic binding protein-like II"/>
    <property type="match status" value="2"/>
</dbReference>
<dbReference type="Gene3D" id="1.10.10.10">
    <property type="entry name" value="Winged helix-like DNA-binding domain superfamily/Winged helix DNA-binding domain"/>
    <property type="match status" value="1"/>
</dbReference>
<dbReference type="InterPro" id="IPR050389">
    <property type="entry name" value="LysR-type_TF"/>
</dbReference>
<dbReference type="InterPro" id="IPR005119">
    <property type="entry name" value="LysR_subst-bd"/>
</dbReference>
<dbReference type="InterPro" id="IPR037416">
    <property type="entry name" value="NodD_PBP2"/>
</dbReference>
<dbReference type="InterPro" id="IPR000847">
    <property type="entry name" value="Tscrpt_reg_HTH_LysR"/>
</dbReference>
<dbReference type="InterPro" id="IPR036388">
    <property type="entry name" value="WH-like_DNA-bd_sf"/>
</dbReference>
<dbReference type="InterPro" id="IPR036390">
    <property type="entry name" value="WH_DNA-bd_sf"/>
</dbReference>
<dbReference type="PANTHER" id="PTHR30118:SF6">
    <property type="entry name" value="HTH-TYPE TRANSCRIPTIONAL REGULATOR LEUO"/>
    <property type="match status" value="1"/>
</dbReference>
<dbReference type="PANTHER" id="PTHR30118">
    <property type="entry name" value="HTH-TYPE TRANSCRIPTIONAL REGULATOR LEUO-RELATED"/>
    <property type="match status" value="1"/>
</dbReference>
<dbReference type="Pfam" id="PF00126">
    <property type="entry name" value="HTH_1"/>
    <property type="match status" value="1"/>
</dbReference>
<dbReference type="Pfam" id="PF03466">
    <property type="entry name" value="LysR_substrate"/>
    <property type="match status" value="1"/>
</dbReference>
<dbReference type="PRINTS" id="PR00039">
    <property type="entry name" value="HTHLYSR"/>
</dbReference>
<dbReference type="SUPFAM" id="SSF53850">
    <property type="entry name" value="Periplasmic binding protein-like II"/>
    <property type="match status" value="1"/>
</dbReference>
<dbReference type="SUPFAM" id="SSF46785">
    <property type="entry name" value="Winged helix' DNA-binding domain"/>
    <property type="match status" value="1"/>
</dbReference>
<dbReference type="PROSITE" id="PS50931">
    <property type="entry name" value="HTH_LYSR"/>
    <property type="match status" value="1"/>
</dbReference>
<accession>Q02876</accession>
<evidence type="ECO:0000255" key="1">
    <source>
        <dbReference type="PROSITE-ProRule" id="PRU00253"/>
    </source>
</evidence>
<evidence type="ECO:0000305" key="2"/>